<evidence type="ECO:0000255" key="1">
    <source>
        <dbReference type="HAMAP-Rule" id="MF_00063"/>
    </source>
</evidence>
<name>CYSH_XYLF2</name>
<accession>B2IA30</accession>
<keyword id="KW-0963">Cytoplasm</keyword>
<keyword id="KW-0560">Oxidoreductase</keyword>
<organism>
    <name type="scientific">Xylella fastidiosa (strain M23)</name>
    <dbReference type="NCBI Taxonomy" id="405441"/>
    <lineage>
        <taxon>Bacteria</taxon>
        <taxon>Pseudomonadati</taxon>
        <taxon>Pseudomonadota</taxon>
        <taxon>Gammaproteobacteria</taxon>
        <taxon>Lysobacterales</taxon>
        <taxon>Lysobacteraceae</taxon>
        <taxon>Xylella</taxon>
    </lineage>
</organism>
<dbReference type="EC" id="1.8.4.8" evidence="1"/>
<dbReference type="EMBL" id="CP001011">
    <property type="protein sequence ID" value="ACB92189.1"/>
    <property type="molecule type" value="Genomic_DNA"/>
</dbReference>
<dbReference type="RefSeq" id="WP_004089016.1">
    <property type="nucleotide sequence ID" value="NC_010577.1"/>
</dbReference>
<dbReference type="SMR" id="B2IA30"/>
<dbReference type="KEGG" id="xfn:XfasM23_0750"/>
<dbReference type="HOGENOM" id="CLU_044089_3_0_6"/>
<dbReference type="UniPathway" id="UPA00140">
    <property type="reaction ID" value="UER00206"/>
</dbReference>
<dbReference type="Proteomes" id="UP000001698">
    <property type="component" value="Chromosome"/>
</dbReference>
<dbReference type="GO" id="GO:0005737">
    <property type="term" value="C:cytoplasm"/>
    <property type="evidence" value="ECO:0007669"/>
    <property type="project" value="UniProtKB-SubCell"/>
</dbReference>
<dbReference type="GO" id="GO:0004604">
    <property type="term" value="F:phosphoadenylyl-sulfate reductase (thioredoxin) activity"/>
    <property type="evidence" value="ECO:0007669"/>
    <property type="project" value="UniProtKB-UniRule"/>
</dbReference>
<dbReference type="GO" id="GO:0070814">
    <property type="term" value="P:hydrogen sulfide biosynthetic process"/>
    <property type="evidence" value="ECO:0007669"/>
    <property type="project" value="UniProtKB-UniRule"/>
</dbReference>
<dbReference type="GO" id="GO:0019379">
    <property type="term" value="P:sulfate assimilation, phosphoadenylyl sulfate reduction by phosphoadenylyl-sulfate reductase (thioredoxin)"/>
    <property type="evidence" value="ECO:0007669"/>
    <property type="project" value="UniProtKB-UniRule"/>
</dbReference>
<dbReference type="CDD" id="cd23945">
    <property type="entry name" value="PAPS_reductase"/>
    <property type="match status" value="1"/>
</dbReference>
<dbReference type="FunFam" id="3.40.50.620:FF:000043">
    <property type="entry name" value="Phosphoadenosine phosphosulfate reductase"/>
    <property type="match status" value="1"/>
</dbReference>
<dbReference type="Gene3D" id="3.40.50.620">
    <property type="entry name" value="HUPs"/>
    <property type="match status" value="1"/>
</dbReference>
<dbReference type="HAMAP" id="MF_00063">
    <property type="entry name" value="CysH"/>
    <property type="match status" value="1"/>
</dbReference>
<dbReference type="InterPro" id="IPR004511">
    <property type="entry name" value="PAPS/APS_Rdtase"/>
</dbReference>
<dbReference type="InterPro" id="IPR002500">
    <property type="entry name" value="PAPS_reduct_dom"/>
</dbReference>
<dbReference type="InterPro" id="IPR011800">
    <property type="entry name" value="PAPS_reductase_CysH"/>
</dbReference>
<dbReference type="InterPro" id="IPR014729">
    <property type="entry name" value="Rossmann-like_a/b/a_fold"/>
</dbReference>
<dbReference type="NCBIfam" id="TIGR00434">
    <property type="entry name" value="cysH"/>
    <property type="match status" value="1"/>
</dbReference>
<dbReference type="NCBIfam" id="TIGR02057">
    <property type="entry name" value="PAPS_reductase"/>
    <property type="match status" value="1"/>
</dbReference>
<dbReference type="NCBIfam" id="NF002537">
    <property type="entry name" value="PRK02090.1"/>
    <property type="match status" value="1"/>
</dbReference>
<dbReference type="PANTHER" id="PTHR46509">
    <property type="entry name" value="PHOSPHOADENOSINE PHOSPHOSULFATE REDUCTASE"/>
    <property type="match status" value="1"/>
</dbReference>
<dbReference type="PANTHER" id="PTHR46509:SF1">
    <property type="entry name" value="PHOSPHOADENOSINE PHOSPHOSULFATE REDUCTASE"/>
    <property type="match status" value="1"/>
</dbReference>
<dbReference type="Pfam" id="PF01507">
    <property type="entry name" value="PAPS_reduct"/>
    <property type="match status" value="1"/>
</dbReference>
<dbReference type="PIRSF" id="PIRSF000857">
    <property type="entry name" value="PAPS_reductase"/>
    <property type="match status" value="1"/>
</dbReference>
<dbReference type="SUPFAM" id="SSF52402">
    <property type="entry name" value="Adenine nucleotide alpha hydrolases-like"/>
    <property type="match status" value="1"/>
</dbReference>
<reference key="1">
    <citation type="journal article" date="2010" name="J. Bacteriol.">
        <title>Whole genome sequences of two Xylella fastidiosa strains (M12 and M23) causing almond leaf scorch disease in California.</title>
        <authorList>
            <person name="Chen J."/>
            <person name="Xie G."/>
            <person name="Han S."/>
            <person name="Chertkov O."/>
            <person name="Sims D."/>
            <person name="Civerolo E.L."/>
        </authorList>
    </citation>
    <scope>NUCLEOTIDE SEQUENCE [LARGE SCALE GENOMIC DNA]</scope>
    <source>
        <strain>M23</strain>
    </source>
</reference>
<comment type="function">
    <text evidence="1">Catalyzes the formation of sulfite from phosphoadenosine 5'-phosphosulfate (PAPS) using thioredoxin as an electron donor.</text>
</comment>
<comment type="catalytic activity">
    <reaction evidence="1">
        <text>[thioredoxin]-disulfide + sulfite + adenosine 3',5'-bisphosphate + 2 H(+) = [thioredoxin]-dithiol + 3'-phosphoadenylyl sulfate</text>
        <dbReference type="Rhea" id="RHEA:11724"/>
        <dbReference type="Rhea" id="RHEA-COMP:10698"/>
        <dbReference type="Rhea" id="RHEA-COMP:10700"/>
        <dbReference type="ChEBI" id="CHEBI:15378"/>
        <dbReference type="ChEBI" id="CHEBI:17359"/>
        <dbReference type="ChEBI" id="CHEBI:29950"/>
        <dbReference type="ChEBI" id="CHEBI:50058"/>
        <dbReference type="ChEBI" id="CHEBI:58339"/>
        <dbReference type="ChEBI" id="CHEBI:58343"/>
        <dbReference type="EC" id="1.8.4.8"/>
    </reaction>
</comment>
<comment type="pathway">
    <text evidence="1">Sulfur metabolism; hydrogen sulfide biosynthesis; sulfite from sulfate: step 3/3.</text>
</comment>
<comment type="subcellular location">
    <subcellularLocation>
        <location evidence="1">Cytoplasm</location>
    </subcellularLocation>
</comment>
<comment type="similarity">
    <text evidence="1">Belongs to the PAPS reductase family. CysH subfamily.</text>
</comment>
<sequence>MTVLPALPPLDDLETLNVHLETLSAENRVCWALEHGPDHPALSSSFGAQSAVMLHLLTRFAPDITVILVDTGYLFPETYRFADTLTERLKLNLKVYQPLRSGAWTEARHGRLWEQGIDGINQYNTLHKVEPMRRALEELQVGTWFTGLRRGQSSTRTQTSIVQRRDERYKISPIADWTDRDIWEYMKHHDLPYHPLWEQGYVSIGDIHTTRPLEPDMREEDTRFFGFKRECGIHENI</sequence>
<gene>
    <name evidence="1" type="primary">cysH</name>
    <name type="ordered locus">XfasM23_0750</name>
</gene>
<protein>
    <recommendedName>
        <fullName evidence="1">Phosphoadenosine 5'-phosphosulfate reductase</fullName>
        <shortName evidence="1">PAPS reductase</shortName>
        <ecNumber evidence="1">1.8.4.8</ecNumber>
    </recommendedName>
    <alternativeName>
        <fullName evidence="1">3'-phosphoadenylylsulfate reductase</fullName>
    </alternativeName>
    <alternativeName>
        <fullName evidence="1">PAPS reductase, thioredoxin dependent</fullName>
    </alternativeName>
    <alternativeName>
        <fullName evidence="1">PAPS sulfotransferase</fullName>
    </alternativeName>
    <alternativeName>
        <fullName evidence="1">PAdoPS reductase</fullName>
    </alternativeName>
</protein>
<proteinExistence type="inferred from homology"/>
<feature type="chain" id="PRO_1000092192" description="Phosphoadenosine 5'-phosphosulfate reductase">
    <location>
        <begin position="1"/>
        <end position="237"/>
    </location>
</feature>
<feature type="active site" description="Nucleophile; cysteine thiosulfonate intermediate" evidence="1">
    <location>
        <position position="231"/>
    </location>
</feature>